<comment type="function">
    <text evidence="1">Mediates the nuclear export of proteins (cargos) with broad substrate specificity. In the nucleus binds cooperatively to its cargo and to the GTPase Ran in its active GTP-bound form. Docking of this trimeric complex to the nuclear pore complex (NPC) is mediated through binding to nucleoporins. Upon transit of a nuclear export complex into the cytoplasm, disassembling of the complex and hydrolysis of Ran-GTP to Ran-GDP (induced by RANBP1 and RANGAP1, respectively) cause release of the cargo from the export receptor. XPO7 then return to the nuclear compartment and mediate another round of transport. The directionality of nuclear export is thought to be conferred by an asymmetric distribution of the GTP- and GDP-bound forms of Ran between the cytoplasm and nucleus (By similarity).</text>
</comment>
<comment type="subunit">
    <text evidence="1">Binds to nucleoporins. Found in a complex with XPO7, EIF4A1, ARHGAP1, VPS26A, VPS29, VPS35 and SFN. Interacts with ARHGAP1 and SFN. Interacts with Ran and cargo proteins in a GTP-dependent manner (By similarity).</text>
</comment>
<comment type="subcellular location">
    <subcellularLocation>
        <location evidence="1">Cytoplasm</location>
    </subcellularLocation>
    <subcellularLocation>
        <location evidence="1">Nucleus</location>
    </subcellularLocation>
    <subcellularLocation>
        <location evidence="1">Nucleus</location>
        <location evidence="1">Nuclear pore complex</location>
    </subcellularLocation>
    <text evidence="1">Shuttles between the nucleus and the cytoplasm.</text>
</comment>
<comment type="alternative products">
    <event type="alternative splicing"/>
    <isoform>
        <id>Q5R9G4-1</id>
        <name>1</name>
        <sequence type="displayed"/>
    </isoform>
    <isoform>
        <id>Q5R9G4-2</id>
        <name>2</name>
        <sequence type="described" ref="VSP_018601"/>
    </isoform>
</comment>
<comment type="similarity">
    <text evidence="5">Belongs to the exportin family.</text>
</comment>
<comment type="sequence caution" evidence="5">
    <conflict type="erroneous termination">
        <sequence resource="EMBL-CDS" id="CAH91596"/>
    </conflict>
    <text>Extended C-terminus.</text>
</comment>
<evidence type="ECO:0000250" key="1"/>
<evidence type="ECO:0000250" key="2">
    <source>
        <dbReference type="UniProtKB" id="Q9UIA9"/>
    </source>
</evidence>
<evidence type="ECO:0000255" key="3">
    <source>
        <dbReference type="PROSITE-ProRule" id="PRU00115"/>
    </source>
</evidence>
<evidence type="ECO:0000303" key="4">
    <source ref="1"/>
</evidence>
<evidence type="ECO:0000305" key="5"/>
<accession>Q5R9G4</accession>
<accession>Q5RCM4</accession>
<feature type="initiator methionine" description="Removed" evidence="2">
    <location>
        <position position="1"/>
    </location>
</feature>
<feature type="chain" id="PRO_0000237673" description="Exportin-7">
    <location>
        <begin position="2"/>
        <end position="1087"/>
    </location>
</feature>
<feature type="domain" description="Importin N-terminal" evidence="3">
    <location>
        <begin position="30"/>
        <end position="96"/>
    </location>
</feature>
<feature type="modified residue" description="N-acetylalanine" evidence="2">
    <location>
        <position position="2"/>
    </location>
</feature>
<feature type="modified residue" description="Phosphoserine" evidence="2">
    <location>
        <position position="570"/>
    </location>
</feature>
<feature type="splice variant" id="VSP_018601" description="In isoform 2." evidence="4">
    <original>MADHVQ</original>
    <variation>MRDPGRK</variation>
    <location>
        <begin position="1"/>
        <end position="6"/>
    </location>
</feature>
<feature type="sequence conflict" description="In Ref. 1; CAH90483." evidence="5" ref="1">
    <original>R</original>
    <variation>K</variation>
    <location>
        <position position="612"/>
    </location>
</feature>
<feature type="sequence conflict" description="In Ref. 1; CAH90483." evidence="5" ref="1">
    <original>C</original>
    <variation>R</variation>
    <location>
        <position position="767"/>
    </location>
</feature>
<feature type="sequence conflict" description="In Ref. 1; CAH90483." evidence="5" ref="1">
    <original>R</original>
    <variation>Q</variation>
    <location>
        <position position="784"/>
    </location>
</feature>
<feature type="sequence conflict" description="In Ref. 1; CAH90483." evidence="5" ref="1">
    <original>K</original>
    <variation>E</variation>
    <location>
        <position position="1014"/>
    </location>
</feature>
<gene>
    <name type="primary">XPO7</name>
</gene>
<protein>
    <recommendedName>
        <fullName>Exportin-7</fullName>
        <shortName>Exp7</shortName>
    </recommendedName>
</protein>
<sequence>MADHVQSLAQLENLCKQLYETTDTTTRLQAEKALVEFTNSPDCLSKCQLLLERGSSSYSQLLAATCLTKLVSRTNNPLPLEQRIDIRNYVLNYLATRPKLATFVTQALIQLYARITKLGWFDCQKDDYVFRNAITDVTRFLQDSVEYCIIGVTILSQLTNEINQADTTHPLTKHRKIASSFRDSSLFDIFTLSCNLLKQASGKNLNLNDESQHGLLMQLLKLTHNCLNFDFIGTSTDESSDDLCTVQIPTSWRSAFLDSSTLQLFFDLYHSIPPSFSPLVLSCLVQIASVRRSLFNNAERAKFLSHLVDGVKRILENPQSLSDPNNYHEFCRLLARLKSNYQLGELVKVENYPEVIRLIANFTVTSLQHWEFAPNSVHYLLSLWQRLAASVPYVKATEPHMLETYTPEVTKAYITSRLESVHIILRDGLEDPLEDTGLVQQQLDQLSTIGRCEYEKTCALLVQLFDQSAQSYQELLQSASASPMDIAVQEGRLTWLVYIIGAVIGGRVSFASTDEQDAMDGELVCRVLQLMNLTDSRLAQAGNEKLELAMLSFFEQFRKIYIGDQVQKSSKLYRRLSEVLGLNDETMVLSVFIGKIITNLKYWGRCEPITSRTLQLLNDLSIGYSSVRKLVKLSAVQFMLNNHTSEHFSFLGINNQSNLTDMRCRTTFYTALGRLLMVDLGEDEDQYEQFMLPLTAAFEAVAQMFSTNSFNEQEAKRTLVGLVRDLRGIAFAFNAKTSFMMLFEWIYPSYMPILQRAIELWYHDPACTTPVLKLMAELVHNRSRRLQFDVSSPNGILLFRETSKMITMYGNRILTLGEVPKDQVYALKLKGISICFSMLKAALSGSYVNFGVFRLYGDDALDNALQTFIKLLLSIPHSDLLDYPKLSQSYYSLLEVLTQDHMNFIASLEPHVIMYILSSISEGLTALDTMVCTGCCSCLDHIVTYLFKQLSRSTKKRTTPLNQESDRFLHIMQQHPEMIQQMLSTVLNIIIFEDCRNQWSMSRPLLGLILLNEKYFSDLRNSIVNSQPPEKQQAMHLCFENLMEGIERNLLTKNRDRFTQNLSAFRREVNDSMKNSTYGVNSNDMMS</sequence>
<organism>
    <name type="scientific">Pongo abelii</name>
    <name type="common">Sumatran orangutan</name>
    <name type="synonym">Pongo pygmaeus abelii</name>
    <dbReference type="NCBI Taxonomy" id="9601"/>
    <lineage>
        <taxon>Eukaryota</taxon>
        <taxon>Metazoa</taxon>
        <taxon>Chordata</taxon>
        <taxon>Craniata</taxon>
        <taxon>Vertebrata</taxon>
        <taxon>Euteleostomi</taxon>
        <taxon>Mammalia</taxon>
        <taxon>Eutheria</taxon>
        <taxon>Euarchontoglires</taxon>
        <taxon>Primates</taxon>
        <taxon>Haplorrhini</taxon>
        <taxon>Catarrhini</taxon>
        <taxon>Hominidae</taxon>
        <taxon>Pongo</taxon>
    </lineage>
</organism>
<name>XPO7_PONAB</name>
<dbReference type="EMBL" id="CR858246">
    <property type="protein sequence ID" value="CAH90483.1"/>
    <property type="molecule type" value="mRNA"/>
</dbReference>
<dbReference type="EMBL" id="CR859424">
    <property type="protein sequence ID" value="CAH91596.1"/>
    <property type="status" value="ALT_SEQ"/>
    <property type="molecule type" value="mRNA"/>
</dbReference>
<dbReference type="RefSeq" id="NP_001125942.1">
    <property type="nucleotide sequence ID" value="NM_001132470.1"/>
</dbReference>
<dbReference type="RefSeq" id="NP_001128777.1">
    <property type="nucleotide sequence ID" value="NM_001135305.1"/>
</dbReference>
<dbReference type="SMR" id="Q5R9G4"/>
<dbReference type="FunCoup" id="Q5R9G4">
    <property type="interactions" value="5601"/>
</dbReference>
<dbReference type="STRING" id="9601.ENSPPYP00000020626"/>
<dbReference type="GeneID" id="100172876"/>
<dbReference type="KEGG" id="pon:100172876"/>
<dbReference type="CTD" id="23039"/>
<dbReference type="eggNOG" id="KOG1410">
    <property type="taxonomic scope" value="Eukaryota"/>
</dbReference>
<dbReference type="InParanoid" id="Q5R9G4"/>
<dbReference type="OrthoDB" id="244158at2759"/>
<dbReference type="Proteomes" id="UP000001595">
    <property type="component" value="Unplaced"/>
</dbReference>
<dbReference type="GO" id="GO:0005737">
    <property type="term" value="C:cytoplasm"/>
    <property type="evidence" value="ECO:0007669"/>
    <property type="project" value="UniProtKB-SubCell"/>
</dbReference>
<dbReference type="GO" id="GO:0005643">
    <property type="term" value="C:nuclear pore"/>
    <property type="evidence" value="ECO:0007669"/>
    <property type="project" value="UniProtKB-SubCell"/>
</dbReference>
<dbReference type="GO" id="GO:0005049">
    <property type="term" value="F:nuclear export signal receptor activity"/>
    <property type="evidence" value="ECO:0007669"/>
    <property type="project" value="InterPro"/>
</dbReference>
<dbReference type="GO" id="GO:0031267">
    <property type="term" value="F:small GTPase binding"/>
    <property type="evidence" value="ECO:0007669"/>
    <property type="project" value="InterPro"/>
</dbReference>
<dbReference type="GO" id="GO:0051028">
    <property type="term" value="P:mRNA transport"/>
    <property type="evidence" value="ECO:0007669"/>
    <property type="project" value="UniProtKB-KW"/>
</dbReference>
<dbReference type="GO" id="GO:0006611">
    <property type="term" value="P:protein export from nucleus"/>
    <property type="evidence" value="ECO:0007669"/>
    <property type="project" value="TreeGrafter"/>
</dbReference>
<dbReference type="FunFam" id="1.25.10.10:FF:000042">
    <property type="entry name" value="exportin-7 isoform X1"/>
    <property type="match status" value="1"/>
</dbReference>
<dbReference type="FunFam" id="1.25.10.10:FF:000059">
    <property type="entry name" value="exportin-7 isoform X2"/>
    <property type="match status" value="1"/>
</dbReference>
<dbReference type="Gene3D" id="1.25.10.10">
    <property type="entry name" value="Leucine-rich Repeat Variant"/>
    <property type="match status" value="2"/>
</dbReference>
<dbReference type="InterPro" id="IPR011989">
    <property type="entry name" value="ARM-like"/>
</dbReference>
<dbReference type="InterPro" id="IPR016024">
    <property type="entry name" value="ARM-type_fold"/>
</dbReference>
<dbReference type="InterPro" id="IPR001494">
    <property type="entry name" value="Importin-beta_N"/>
</dbReference>
<dbReference type="InterPro" id="IPR044189">
    <property type="entry name" value="XPO4/7-like"/>
</dbReference>
<dbReference type="PANTHER" id="PTHR12596">
    <property type="entry name" value="EXPORTIN 4,7-RELATED"/>
    <property type="match status" value="1"/>
</dbReference>
<dbReference type="PANTHER" id="PTHR12596:SF11">
    <property type="entry name" value="EXPORTIN-7"/>
    <property type="match status" value="1"/>
</dbReference>
<dbReference type="Pfam" id="PF03810">
    <property type="entry name" value="IBN_N"/>
    <property type="match status" value="1"/>
</dbReference>
<dbReference type="SMART" id="SM00913">
    <property type="entry name" value="IBN_N"/>
    <property type="match status" value="1"/>
</dbReference>
<dbReference type="SUPFAM" id="SSF48371">
    <property type="entry name" value="ARM repeat"/>
    <property type="match status" value="1"/>
</dbReference>
<dbReference type="PROSITE" id="PS50166">
    <property type="entry name" value="IMPORTIN_B_NT"/>
    <property type="match status" value="1"/>
</dbReference>
<proteinExistence type="evidence at transcript level"/>
<reference key="1">
    <citation type="submission" date="2004-11" db="EMBL/GenBank/DDBJ databases">
        <authorList>
            <consortium name="The German cDNA consortium"/>
        </authorList>
    </citation>
    <scope>NUCLEOTIDE SEQUENCE [LARGE SCALE MRNA] (ISOFORMS 1 AND 2)</scope>
    <source>
        <tissue>Kidney</tissue>
    </source>
</reference>
<keyword id="KW-0007">Acetylation</keyword>
<keyword id="KW-0025">Alternative splicing</keyword>
<keyword id="KW-0963">Cytoplasm</keyword>
<keyword id="KW-0509">mRNA transport</keyword>
<keyword id="KW-0906">Nuclear pore complex</keyword>
<keyword id="KW-0539">Nucleus</keyword>
<keyword id="KW-0597">Phosphoprotein</keyword>
<keyword id="KW-0653">Protein transport</keyword>
<keyword id="KW-1185">Reference proteome</keyword>
<keyword id="KW-0811">Translocation</keyword>
<keyword id="KW-0813">Transport</keyword>